<keyword id="KW-0028">Amino-acid biosynthesis</keyword>
<keyword id="KW-0057">Aromatic amino acid biosynthesis</keyword>
<keyword id="KW-0210">Decarboxylase</keyword>
<keyword id="KW-0456">Lyase</keyword>
<keyword id="KW-1185">Reference proteome</keyword>
<keyword id="KW-0822">Tryptophan biosynthesis</keyword>
<organism>
    <name type="scientific">Burkholderia multivorans (strain ATCC 17616 / 249)</name>
    <dbReference type="NCBI Taxonomy" id="395019"/>
    <lineage>
        <taxon>Bacteria</taxon>
        <taxon>Pseudomonadati</taxon>
        <taxon>Pseudomonadota</taxon>
        <taxon>Betaproteobacteria</taxon>
        <taxon>Burkholderiales</taxon>
        <taxon>Burkholderiaceae</taxon>
        <taxon>Burkholderia</taxon>
        <taxon>Burkholderia cepacia complex</taxon>
    </lineage>
</organism>
<name>TRPC_BURM1</name>
<gene>
    <name evidence="1" type="primary">trpC</name>
    <name type="ordered locus">Bmul_2863</name>
    <name type="ordered locus">BMULJ_00370</name>
</gene>
<dbReference type="EC" id="4.1.1.48" evidence="1"/>
<dbReference type="EMBL" id="CP000868">
    <property type="protein sequence ID" value="ABX16547.1"/>
    <property type="molecule type" value="Genomic_DNA"/>
</dbReference>
<dbReference type="EMBL" id="AP009385">
    <property type="protein sequence ID" value="BAG42343.1"/>
    <property type="molecule type" value="Genomic_DNA"/>
</dbReference>
<dbReference type="RefSeq" id="WP_006400471.1">
    <property type="nucleotide sequence ID" value="NC_010804.1"/>
</dbReference>
<dbReference type="SMR" id="A9AJ43"/>
<dbReference type="STRING" id="395019.BMULJ_00370"/>
<dbReference type="KEGG" id="bmj:BMULJ_00370"/>
<dbReference type="KEGG" id="bmu:Bmul_2863"/>
<dbReference type="eggNOG" id="COG0134">
    <property type="taxonomic scope" value="Bacteria"/>
</dbReference>
<dbReference type="HOGENOM" id="CLU_034247_2_0_4"/>
<dbReference type="UniPathway" id="UPA00035">
    <property type="reaction ID" value="UER00043"/>
</dbReference>
<dbReference type="Proteomes" id="UP000008815">
    <property type="component" value="Chromosome 1"/>
</dbReference>
<dbReference type="GO" id="GO:0004425">
    <property type="term" value="F:indole-3-glycerol-phosphate synthase activity"/>
    <property type="evidence" value="ECO:0007669"/>
    <property type="project" value="UniProtKB-UniRule"/>
</dbReference>
<dbReference type="GO" id="GO:0004640">
    <property type="term" value="F:phosphoribosylanthranilate isomerase activity"/>
    <property type="evidence" value="ECO:0007669"/>
    <property type="project" value="TreeGrafter"/>
</dbReference>
<dbReference type="GO" id="GO:0000162">
    <property type="term" value="P:L-tryptophan biosynthetic process"/>
    <property type="evidence" value="ECO:0007669"/>
    <property type="project" value="UniProtKB-UniRule"/>
</dbReference>
<dbReference type="CDD" id="cd00331">
    <property type="entry name" value="IGPS"/>
    <property type="match status" value="1"/>
</dbReference>
<dbReference type="FunFam" id="3.20.20.70:FF:000024">
    <property type="entry name" value="Indole-3-glycerol phosphate synthase"/>
    <property type="match status" value="1"/>
</dbReference>
<dbReference type="Gene3D" id="3.20.20.70">
    <property type="entry name" value="Aldolase class I"/>
    <property type="match status" value="1"/>
</dbReference>
<dbReference type="HAMAP" id="MF_00134_B">
    <property type="entry name" value="IGPS_B"/>
    <property type="match status" value="1"/>
</dbReference>
<dbReference type="InterPro" id="IPR013785">
    <property type="entry name" value="Aldolase_TIM"/>
</dbReference>
<dbReference type="InterPro" id="IPR045186">
    <property type="entry name" value="Indole-3-glycerol_P_synth"/>
</dbReference>
<dbReference type="InterPro" id="IPR013798">
    <property type="entry name" value="Indole-3-glycerol_P_synth_dom"/>
</dbReference>
<dbReference type="InterPro" id="IPR001468">
    <property type="entry name" value="Indole-3-GlycerolPSynthase_CS"/>
</dbReference>
<dbReference type="InterPro" id="IPR011060">
    <property type="entry name" value="RibuloseP-bd_barrel"/>
</dbReference>
<dbReference type="NCBIfam" id="NF001373">
    <property type="entry name" value="PRK00278.1-6"/>
    <property type="match status" value="1"/>
</dbReference>
<dbReference type="NCBIfam" id="NF001377">
    <property type="entry name" value="PRK00278.2-4"/>
    <property type="match status" value="1"/>
</dbReference>
<dbReference type="PANTHER" id="PTHR22854:SF2">
    <property type="entry name" value="INDOLE-3-GLYCEROL-PHOSPHATE SYNTHASE"/>
    <property type="match status" value="1"/>
</dbReference>
<dbReference type="PANTHER" id="PTHR22854">
    <property type="entry name" value="TRYPTOPHAN BIOSYNTHESIS PROTEIN"/>
    <property type="match status" value="1"/>
</dbReference>
<dbReference type="Pfam" id="PF00218">
    <property type="entry name" value="IGPS"/>
    <property type="match status" value="1"/>
</dbReference>
<dbReference type="SUPFAM" id="SSF51366">
    <property type="entry name" value="Ribulose-phoshate binding barrel"/>
    <property type="match status" value="1"/>
</dbReference>
<dbReference type="PROSITE" id="PS00614">
    <property type="entry name" value="IGPS"/>
    <property type="match status" value="1"/>
</dbReference>
<sequence>MSDILDRIIAVKREEVAAAMRSTPLEALKLEASARDRRDFVGALRAKHAAGQPAVIAEIKKASPSKGVLREHFVPADIARSYAAHGAACLSVLTDEQFFQGSVRYLEEARAACDLPVLRKDFIVDAYQILEARAMGADAILLIAAALDTPLMQELEAYAHSLDLAVLVEVHDRNEMEQALTLKTPLLGINNRNLRTFETSIRATLDMLDMIPQDRIVVTESGILSRADVDTMRAANVNTFLVGEAFMRADQPGEELARMFF</sequence>
<accession>A9AJ43</accession>
<evidence type="ECO:0000255" key="1">
    <source>
        <dbReference type="HAMAP-Rule" id="MF_00134"/>
    </source>
</evidence>
<protein>
    <recommendedName>
        <fullName evidence="1">Indole-3-glycerol phosphate synthase</fullName>
        <shortName evidence="1">IGPS</shortName>
        <ecNumber evidence="1">4.1.1.48</ecNumber>
    </recommendedName>
</protein>
<proteinExistence type="inferred from homology"/>
<comment type="catalytic activity">
    <reaction evidence="1">
        <text>1-(2-carboxyphenylamino)-1-deoxy-D-ribulose 5-phosphate + H(+) = (1S,2R)-1-C-(indol-3-yl)glycerol 3-phosphate + CO2 + H2O</text>
        <dbReference type="Rhea" id="RHEA:23476"/>
        <dbReference type="ChEBI" id="CHEBI:15377"/>
        <dbReference type="ChEBI" id="CHEBI:15378"/>
        <dbReference type="ChEBI" id="CHEBI:16526"/>
        <dbReference type="ChEBI" id="CHEBI:58613"/>
        <dbReference type="ChEBI" id="CHEBI:58866"/>
        <dbReference type="EC" id="4.1.1.48"/>
    </reaction>
</comment>
<comment type="pathway">
    <text evidence="1">Amino-acid biosynthesis; L-tryptophan biosynthesis; L-tryptophan from chorismate: step 4/5.</text>
</comment>
<comment type="similarity">
    <text evidence="1">Belongs to the TrpC family.</text>
</comment>
<feature type="chain" id="PRO_1000095855" description="Indole-3-glycerol phosphate synthase">
    <location>
        <begin position="1"/>
        <end position="261"/>
    </location>
</feature>
<reference key="1">
    <citation type="submission" date="2007-10" db="EMBL/GenBank/DDBJ databases">
        <title>Complete sequence of chromosome 1 of Burkholderia multivorans ATCC 17616.</title>
        <authorList>
            <person name="Copeland A."/>
            <person name="Lucas S."/>
            <person name="Lapidus A."/>
            <person name="Barry K."/>
            <person name="Glavina del Rio T."/>
            <person name="Dalin E."/>
            <person name="Tice H."/>
            <person name="Pitluck S."/>
            <person name="Chain P."/>
            <person name="Malfatti S."/>
            <person name="Shin M."/>
            <person name="Vergez L."/>
            <person name="Schmutz J."/>
            <person name="Larimer F."/>
            <person name="Land M."/>
            <person name="Hauser L."/>
            <person name="Kyrpides N."/>
            <person name="Kim E."/>
            <person name="Tiedje J."/>
            <person name="Richardson P."/>
        </authorList>
    </citation>
    <scope>NUCLEOTIDE SEQUENCE [LARGE SCALE GENOMIC DNA]</scope>
    <source>
        <strain>ATCC 17616 / 249</strain>
    </source>
</reference>
<reference key="2">
    <citation type="submission" date="2007-04" db="EMBL/GenBank/DDBJ databases">
        <title>Complete genome sequence of Burkholderia multivorans ATCC 17616.</title>
        <authorList>
            <person name="Ohtsubo Y."/>
            <person name="Yamashita A."/>
            <person name="Kurokawa K."/>
            <person name="Takami H."/>
            <person name="Yuhara S."/>
            <person name="Nishiyama E."/>
            <person name="Endo R."/>
            <person name="Miyazaki R."/>
            <person name="Ono A."/>
            <person name="Yano K."/>
            <person name="Ito M."/>
            <person name="Sota M."/>
            <person name="Yuji N."/>
            <person name="Hattori M."/>
            <person name="Tsuda M."/>
        </authorList>
    </citation>
    <scope>NUCLEOTIDE SEQUENCE [LARGE SCALE GENOMIC DNA]</scope>
    <source>
        <strain>ATCC 17616 / 249</strain>
    </source>
</reference>